<accession>C5BGD2</accession>
<evidence type="ECO:0000255" key="1">
    <source>
        <dbReference type="HAMAP-Rule" id="MF_00658"/>
    </source>
</evidence>
<keyword id="KW-0963">Cytoplasm</keyword>
<keyword id="KW-0489">Methyltransferase</keyword>
<keyword id="KW-0698">rRNA processing</keyword>
<keyword id="KW-0949">S-adenosyl-L-methionine</keyword>
<keyword id="KW-0808">Transferase</keyword>
<gene>
    <name evidence="1" type="primary">rlmH</name>
    <name type="ordered locus">NT01EI_2941</name>
</gene>
<proteinExistence type="inferred from homology"/>
<dbReference type="EC" id="2.1.1.177" evidence="1"/>
<dbReference type="EMBL" id="CP001600">
    <property type="protein sequence ID" value="ACR70095.1"/>
    <property type="molecule type" value="Genomic_DNA"/>
</dbReference>
<dbReference type="RefSeq" id="WP_015872189.1">
    <property type="nucleotide sequence ID" value="NZ_CP169062.1"/>
</dbReference>
<dbReference type="SMR" id="C5BGD2"/>
<dbReference type="STRING" id="67780.B6E78_06610"/>
<dbReference type="GeneID" id="69539824"/>
<dbReference type="KEGG" id="eic:NT01EI_2941"/>
<dbReference type="PATRIC" id="fig|634503.3.peg.2628"/>
<dbReference type="HOGENOM" id="CLU_100552_1_0_6"/>
<dbReference type="OrthoDB" id="9806643at2"/>
<dbReference type="Proteomes" id="UP000001485">
    <property type="component" value="Chromosome"/>
</dbReference>
<dbReference type="GO" id="GO:0005737">
    <property type="term" value="C:cytoplasm"/>
    <property type="evidence" value="ECO:0007669"/>
    <property type="project" value="UniProtKB-SubCell"/>
</dbReference>
<dbReference type="GO" id="GO:0070038">
    <property type="term" value="F:rRNA (pseudouridine-N3-)-methyltransferase activity"/>
    <property type="evidence" value="ECO:0007669"/>
    <property type="project" value="UniProtKB-UniRule"/>
</dbReference>
<dbReference type="CDD" id="cd18081">
    <property type="entry name" value="RlmH-like"/>
    <property type="match status" value="1"/>
</dbReference>
<dbReference type="Gene3D" id="3.40.1280.10">
    <property type="match status" value="1"/>
</dbReference>
<dbReference type="HAMAP" id="MF_00658">
    <property type="entry name" value="23SrRNA_methyltr_H"/>
    <property type="match status" value="1"/>
</dbReference>
<dbReference type="InterPro" id="IPR029028">
    <property type="entry name" value="Alpha/beta_knot_MTases"/>
</dbReference>
<dbReference type="InterPro" id="IPR003742">
    <property type="entry name" value="RlmH-like"/>
</dbReference>
<dbReference type="InterPro" id="IPR029026">
    <property type="entry name" value="tRNA_m1G_MTases_N"/>
</dbReference>
<dbReference type="NCBIfam" id="NF000984">
    <property type="entry name" value="PRK00103.1-1"/>
    <property type="match status" value="1"/>
</dbReference>
<dbReference type="NCBIfam" id="NF000986">
    <property type="entry name" value="PRK00103.1-4"/>
    <property type="match status" value="1"/>
</dbReference>
<dbReference type="NCBIfam" id="TIGR00246">
    <property type="entry name" value="tRNA_RlmH_YbeA"/>
    <property type="match status" value="1"/>
</dbReference>
<dbReference type="PANTHER" id="PTHR33603">
    <property type="entry name" value="METHYLTRANSFERASE"/>
    <property type="match status" value="1"/>
</dbReference>
<dbReference type="PANTHER" id="PTHR33603:SF1">
    <property type="entry name" value="RIBOSOMAL RNA LARGE SUBUNIT METHYLTRANSFERASE H"/>
    <property type="match status" value="1"/>
</dbReference>
<dbReference type="Pfam" id="PF02590">
    <property type="entry name" value="SPOUT_MTase"/>
    <property type="match status" value="1"/>
</dbReference>
<dbReference type="PIRSF" id="PIRSF004505">
    <property type="entry name" value="MT_bac"/>
    <property type="match status" value="1"/>
</dbReference>
<dbReference type="SUPFAM" id="SSF75217">
    <property type="entry name" value="alpha/beta knot"/>
    <property type="match status" value="1"/>
</dbReference>
<name>RLMH_EDWI9</name>
<protein>
    <recommendedName>
        <fullName evidence="1">Ribosomal RNA large subunit methyltransferase H</fullName>
        <ecNumber evidence="1">2.1.1.177</ecNumber>
    </recommendedName>
    <alternativeName>
        <fullName evidence="1">23S rRNA (pseudouridine1915-N3)-methyltransferase</fullName>
    </alternativeName>
    <alternativeName>
        <fullName evidence="1">23S rRNA m3Psi1915 methyltransferase</fullName>
    </alternativeName>
    <alternativeName>
        <fullName evidence="1">rRNA (pseudouridine-N3-)-methyltransferase RlmH</fullName>
    </alternativeName>
</protein>
<sequence length="156" mass="17364">MKLQLVAVGTKMPDWVQTGFLDYIKRFPKDMPFELTEVPAGKRGKNADIRRILEREGELMLAAVGKGNRIVTLDIPGKPWDTPALAGQLERWKQDGRDVSLLIGGPEGLAPTCKGAAEQSWSLSPLTLPHPLVRVLVAESLYRAWSITANHPYHRE</sequence>
<organism>
    <name type="scientific">Edwardsiella ictaluri (strain 93-146)</name>
    <dbReference type="NCBI Taxonomy" id="634503"/>
    <lineage>
        <taxon>Bacteria</taxon>
        <taxon>Pseudomonadati</taxon>
        <taxon>Pseudomonadota</taxon>
        <taxon>Gammaproteobacteria</taxon>
        <taxon>Enterobacterales</taxon>
        <taxon>Hafniaceae</taxon>
        <taxon>Edwardsiella</taxon>
    </lineage>
</organism>
<reference key="1">
    <citation type="submission" date="2009-03" db="EMBL/GenBank/DDBJ databases">
        <title>Complete genome sequence of Edwardsiella ictaluri 93-146.</title>
        <authorList>
            <person name="Williams M.L."/>
            <person name="Gillaspy A.F."/>
            <person name="Dyer D.W."/>
            <person name="Thune R.L."/>
            <person name="Waldbieser G.C."/>
            <person name="Schuster S.C."/>
            <person name="Gipson J."/>
            <person name="Zaitshik J."/>
            <person name="Landry C."/>
            <person name="Lawrence M.L."/>
        </authorList>
    </citation>
    <scope>NUCLEOTIDE SEQUENCE [LARGE SCALE GENOMIC DNA]</scope>
    <source>
        <strain>93-146</strain>
    </source>
</reference>
<comment type="function">
    <text evidence="1">Specifically methylates the pseudouridine at position 1915 (m3Psi1915) in 23S rRNA.</text>
</comment>
<comment type="catalytic activity">
    <reaction evidence="1">
        <text>pseudouridine(1915) in 23S rRNA + S-adenosyl-L-methionine = N(3)-methylpseudouridine(1915) in 23S rRNA + S-adenosyl-L-homocysteine + H(+)</text>
        <dbReference type="Rhea" id="RHEA:42752"/>
        <dbReference type="Rhea" id="RHEA-COMP:10221"/>
        <dbReference type="Rhea" id="RHEA-COMP:10222"/>
        <dbReference type="ChEBI" id="CHEBI:15378"/>
        <dbReference type="ChEBI" id="CHEBI:57856"/>
        <dbReference type="ChEBI" id="CHEBI:59789"/>
        <dbReference type="ChEBI" id="CHEBI:65314"/>
        <dbReference type="ChEBI" id="CHEBI:74486"/>
        <dbReference type="EC" id="2.1.1.177"/>
    </reaction>
</comment>
<comment type="subunit">
    <text evidence="1">Homodimer.</text>
</comment>
<comment type="subcellular location">
    <subcellularLocation>
        <location evidence="1">Cytoplasm</location>
    </subcellularLocation>
</comment>
<comment type="similarity">
    <text evidence="1">Belongs to the RNA methyltransferase RlmH family.</text>
</comment>
<feature type="chain" id="PRO_1000212451" description="Ribosomal RNA large subunit methyltransferase H">
    <location>
        <begin position="1"/>
        <end position="156"/>
    </location>
</feature>
<feature type="binding site" evidence="1">
    <location>
        <position position="73"/>
    </location>
    <ligand>
        <name>S-adenosyl-L-methionine</name>
        <dbReference type="ChEBI" id="CHEBI:59789"/>
    </ligand>
</feature>
<feature type="binding site" evidence="1">
    <location>
        <position position="104"/>
    </location>
    <ligand>
        <name>S-adenosyl-L-methionine</name>
        <dbReference type="ChEBI" id="CHEBI:59789"/>
    </ligand>
</feature>
<feature type="binding site" evidence="1">
    <location>
        <begin position="123"/>
        <end position="128"/>
    </location>
    <ligand>
        <name>S-adenosyl-L-methionine</name>
        <dbReference type="ChEBI" id="CHEBI:59789"/>
    </ligand>
</feature>